<evidence type="ECO:0000250" key="1"/>
<evidence type="ECO:0000250" key="2">
    <source>
        <dbReference type="UniProtKB" id="P51154"/>
    </source>
</evidence>
<evidence type="ECO:0000250" key="3">
    <source>
        <dbReference type="UniProtKB" id="Q9UL26"/>
    </source>
</evidence>
<evidence type="ECO:0000256" key="4">
    <source>
        <dbReference type="SAM" id="MobiDB-lite"/>
    </source>
</evidence>
<evidence type="ECO:0000269" key="5">
    <source>
    </source>
</evidence>
<evidence type="ECO:0000269" key="6">
    <source>
    </source>
</evidence>
<evidence type="ECO:0000269" key="7">
    <source>
    </source>
</evidence>
<evidence type="ECO:0000269" key="8">
    <source>
    </source>
</evidence>
<evidence type="ECO:0000305" key="9"/>
<evidence type="ECO:0007829" key="10">
    <source>
        <dbReference type="PDB" id="1Z0J"/>
    </source>
</evidence>
<comment type="function">
    <text evidence="3 6 7">Plays a role in endocytosis and intracellular protein transport (PubMed:19759177, PubMed:27718357). Mediates trafficking of TF from early endosomes to recycling endosomes. Required for NGF-mediated endocytosis of NTRK1, and subsequent neurite outgrowth. Binds GTP and GDP and has low GTPase activity. Alternates between a GTP-bound active form and a GDP-bound inactive form (By similarity).</text>
</comment>
<comment type="subunit">
    <text evidence="2 3 5 6">Binds EEA1 (By similarity). Interacts (in its GTP-bound form) with RINL (By similarity). Interacts directly with ZFYVE20 (PubMed:16034420). Interacts (in its GTP-bound form) with RABGEF1 (PubMed:19759177).</text>
</comment>
<comment type="subcellular location">
    <subcellularLocation>
        <location evidence="7">Endosome membrane</location>
        <topology evidence="9">Lipid-anchor</topology>
    </subcellularLocation>
    <subcellularLocation>
        <location evidence="2">Cell membrane</location>
        <topology evidence="9">Lipid-anchor</topology>
    </subcellularLocation>
    <subcellularLocation>
        <location evidence="6 7">Early endosome</location>
    </subcellularLocation>
    <subcellularLocation>
        <location evidence="2">Late endosome</location>
    </subcellularLocation>
    <subcellularLocation>
        <location evidence="3">Cell projection</location>
        <location evidence="3">Ruffle</location>
    </subcellularLocation>
    <subcellularLocation>
        <location evidence="7">Cytoplasmic vesicle</location>
    </subcellularLocation>
    <subcellularLocation>
        <location evidence="3">Cytoplasmic vesicle</location>
        <location evidence="3">Phagosome</location>
    </subcellularLocation>
    <subcellularLocation>
        <location evidence="9">Cytoplasmic vesicle</location>
        <location evidence="9">Phagosome membrane</location>
        <topology evidence="9">Lipid-anchor</topology>
        <orientation evidence="9">Cytoplasmic side</orientation>
    </subcellularLocation>
    <text evidence="3">Recruited to phagosomes containing S.aureus or M.tuberculosis.</text>
</comment>
<comment type="tissue specificity">
    <text evidence="8">Detected in brain and heart, and at lower levels in lung and spleen.</text>
</comment>
<comment type="similarity">
    <text evidence="9">Belongs to the small GTPase superfamily. Rab family.</text>
</comment>
<organism>
    <name type="scientific">Mus musculus</name>
    <name type="common">Mouse</name>
    <dbReference type="NCBI Taxonomy" id="10090"/>
    <lineage>
        <taxon>Eukaryota</taxon>
        <taxon>Metazoa</taxon>
        <taxon>Chordata</taxon>
        <taxon>Craniata</taxon>
        <taxon>Vertebrata</taxon>
        <taxon>Euteleostomi</taxon>
        <taxon>Mammalia</taxon>
        <taxon>Eutheria</taxon>
        <taxon>Euarchontoglires</taxon>
        <taxon>Glires</taxon>
        <taxon>Rodentia</taxon>
        <taxon>Myomorpha</taxon>
        <taxon>Muroidea</taxon>
        <taxon>Muridae</taxon>
        <taxon>Murinae</taxon>
        <taxon>Mus</taxon>
        <taxon>Mus</taxon>
    </lineage>
</organism>
<accession>P35285</accession>
<accession>Q3UCA7</accession>
<accession>Q91VD4</accession>
<feature type="chain" id="PRO_0000121210" description="Ras-related protein Rab-22A">
    <location>
        <begin position="1"/>
        <end position="194"/>
    </location>
</feature>
<feature type="region of interest" description="Disordered" evidence="4">
    <location>
        <begin position="170"/>
        <end position="194"/>
    </location>
</feature>
<feature type="short sequence motif" description="Effector region" evidence="1">
    <location>
        <begin position="34"/>
        <end position="42"/>
    </location>
</feature>
<feature type="compositionally biased region" description="Basic and acidic residues" evidence="4">
    <location>
        <begin position="185"/>
        <end position="194"/>
    </location>
</feature>
<feature type="binding site">
    <location>
        <begin position="12"/>
        <end position="20"/>
    </location>
    <ligand>
        <name>GTP</name>
        <dbReference type="ChEBI" id="CHEBI:37565"/>
    </ligand>
</feature>
<feature type="binding site">
    <location>
        <begin position="60"/>
        <end position="64"/>
    </location>
    <ligand>
        <name>GTP</name>
        <dbReference type="ChEBI" id="CHEBI:37565"/>
    </ligand>
</feature>
<feature type="binding site">
    <location>
        <begin position="118"/>
        <end position="121"/>
    </location>
    <ligand>
        <name>GTP</name>
        <dbReference type="ChEBI" id="CHEBI:37565"/>
    </ligand>
</feature>
<feature type="binding site">
    <location>
        <begin position="148"/>
        <end position="150"/>
    </location>
    <ligand>
        <name>GTP</name>
        <dbReference type="ChEBI" id="CHEBI:37565"/>
    </ligand>
</feature>
<feature type="lipid moiety-binding region" description="S-geranylgeranyl cysteine" evidence="1">
    <location>
        <position position="193"/>
    </location>
</feature>
<feature type="lipid moiety-binding region" description="S-geranylgeranyl cysteine" evidence="1">
    <location>
        <position position="194"/>
    </location>
</feature>
<feature type="mutagenesis site" description="Constitutively active. Disrupts general recycling of receptors in embryonic fibroblasts." evidence="7">
    <original>Q</original>
    <variation>L</variation>
    <location>
        <position position="64"/>
    </location>
</feature>
<feature type="sequence conflict" description="In Ref. 4; AAK14828." evidence="9" ref="4">
    <original>H</original>
    <variation>R</variation>
    <location>
        <position position="54"/>
    </location>
</feature>
<feature type="strand" evidence="10">
    <location>
        <begin position="2"/>
        <end position="11"/>
    </location>
</feature>
<feature type="helix" evidence="10">
    <location>
        <begin position="18"/>
        <end position="27"/>
    </location>
</feature>
<feature type="strand" evidence="10">
    <location>
        <begin position="39"/>
        <end position="49"/>
    </location>
</feature>
<feature type="strand" evidence="10">
    <location>
        <begin position="52"/>
        <end position="61"/>
    </location>
</feature>
<feature type="helix" evidence="10">
    <location>
        <begin position="65"/>
        <end position="71"/>
    </location>
</feature>
<feature type="helix" evidence="10">
    <location>
        <begin position="72"/>
        <end position="75"/>
    </location>
</feature>
<feature type="strand" evidence="10">
    <location>
        <begin position="79"/>
        <end position="86"/>
    </location>
</feature>
<feature type="helix" evidence="10">
    <location>
        <begin position="90"/>
        <end position="106"/>
    </location>
</feature>
<feature type="strand" evidence="10">
    <location>
        <begin position="111"/>
        <end position="118"/>
    </location>
</feature>
<feature type="helix" evidence="10">
    <location>
        <begin position="123"/>
        <end position="125"/>
    </location>
</feature>
<feature type="helix" evidence="10">
    <location>
        <begin position="130"/>
        <end position="139"/>
    </location>
</feature>
<feature type="strand" evidence="10">
    <location>
        <begin position="143"/>
        <end position="146"/>
    </location>
</feature>
<feature type="turn" evidence="10">
    <location>
        <begin position="149"/>
        <end position="152"/>
    </location>
</feature>
<feature type="helix" evidence="10">
    <location>
        <begin position="155"/>
        <end position="165"/>
    </location>
</feature>
<proteinExistence type="evidence at protein level"/>
<name>RB22A_MOUSE</name>
<gene>
    <name type="primary">Rab22a</name>
    <name type="synonym">Rab22</name>
</gene>
<dbReference type="EMBL" id="AJ311124">
    <property type="protein sequence ID" value="CAC41378.1"/>
    <property type="molecule type" value="mRNA"/>
</dbReference>
<dbReference type="EMBL" id="AK031667">
    <property type="protein sequence ID" value="BAC27501.1"/>
    <property type="molecule type" value="mRNA"/>
</dbReference>
<dbReference type="EMBL" id="AK146594">
    <property type="protein sequence ID" value="BAE27289.1"/>
    <property type="molecule type" value="mRNA"/>
</dbReference>
<dbReference type="EMBL" id="AK150617">
    <property type="protein sequence ID" value="BAE29707.1"/>
    <property type="molecule type" value="mRNA"/>
</dbReference>
<dbReference type="EMBL" id="BC006596">
    <property type="protein sequence ID" value="AAH06596.1"/>
    <property type="molecule type" value="mRNA"/>
</dbReference>
<dbReference type="EMBL" id="M79304">
    <property type="protein sequence ID" value="AAK14828.1"/>
    <property type="molecule type" value="mRNA"/>
</dbReference>
<dbReference type="CCDS" id="CCDS38352.1"/>
<dbReference type="PIR" id="JH0644">
    <property type="entry name" value="JH0644"/>
</dbReference>
<dbReference type="RefSeq" id="NP_077756.2">
    <property type="nucleotide sequence ID" value="NM_024436.3"/>
</dbReference>
<dbReference type="PDB" id="1YVD">
    <property type="method" value="X-ray"/>
    <property type="resolution" value="1.93 A"/>
    <property type="chains" value="A=3-169"/>
</dbReference>
<dbReference type="PDB" id="1Z0J">
    <property type="method" value="X-ray"/>
    <property type="resolution" value="1.32 A"/>
    <property type="chains" value="A=2-169"/>
</dbReference>
<dbReference type="PDBsum" id="1YVD"/>
<dbReference type="PDBsum" id="1Z0J"/>
<dbReference type="SMR" id="P35285"/>
<dbReference type="BioGRID" id="202539">
    <property type="interactions" value="1"/>
</dbReference>
<dbReference type="DIP" id="DIP-60516N"/>
<dbReference type="FunCoup" id="P35285">
    <property type="interactions" value="2123"/>
</dbReference>
<dbReference type="IntAct" id="P35285">
    <property type="interactions" value="33"/>
</dbReference>
<dbReference type="STRING" id="10090.ENSMUSP00000029024"/>
<dbReference type="GlyGen" id="P35285">
    <property type="glycosylation" value="1 site, 1 O-linked glycan (1 site)"/>
</dbReference>
<dbReference type="iPTMnet" id="P35285"/>
<dbReference type="PhosphoSitePlus" id="P35285"/>
<dbReference type="SwissPalm" id="P35285"/>
<dbReference type="PaxDb" id="10090-ENSMUSP00000029024"/>
<dbReference type="PeptideAtlas" id="P35285"/>
<dbReference type="ProteomicsDB" id="300246"/>
<dbReference type="Pumba" id="P35285"/>
<dbReference type="Antibodypedia" id="29093">
    <property type="antibodies" value="162 antibodies from 30 providers"/>
</dbReference>
<dbReference type="DNASU" id="19334"/>
<dbReference type="Ensembl" id="ENSMUST00000029024.10">
    <property type="protein sequence ID" value="ENSMUSP00000029024.4"/>
    <property type="gene ID" value="ENSMUSG00000027519.11"/>
</dbReference>
<dbReference type="GeneID" id="19334"/>
<dbReference type="KEGG" id="mmu:19334"/>
<dbReference type="UCSC" id="uc008oed.1">
    <property type="organism name" value="mouse"/>
</dbReference>
<dbReference type="AGR" id="MGI:105072"/>
<dbReference type="CTD" id="57403"/>
<dbReference type="MGI" id="MGI:105072">
    <property type="gene designation" value="Rab22a"/>
</dbReference>
<dbReference type="VEuPathDB" id="HostDB:ENSMUSG00000027519"/>
<dbReference type="eggNOG" id="KOG0092">
    <property type="taxonomic scope" value="Eukaryota"/>
</dbReference>
<dbReference type="GeneTree" id="ENSGT00940000157009"/>
<dbReference type="HOGENOM" id="CLU_041217_10_2_1"/>
<dbReference type="InParanoid" id="P35285"/>
<dbReference type="OMA" id="SESHRTC"/>
<dbReference type="OrthoDB" id="63533at2759"/>
<dbReference type="PhylomeDB" id="P35285"/>
<dbReference type="TreeFam" id="TF331262"/>
<dbReference type="Reactome" id="R-MMU-8873719">
    <property type="pathway name" value="RAB geranylgeranylation"/>
</dbReference>
<dbReference type="BioGRID-ORCS" id="19334">
    <property type="hits" value="3 hits in 77 CRISPR screens"/>
</dbReference>
<dbReference type="ChiTaRS" id="Rab22a">
    <property type="organism name" value="mouse"/>
</dbReference>
<dbReference type="EvolutionaryTrace" id="P35285"/>
<dbReference type="PRO" id="PR:P35285"/>
<dbReference type="Proteomes" id="UP000000589">
    <property type="component" value="Chromosome 2"/>
</dbReference>
<dbReference type="RNAct" id="P35285">
    <property type="molecule type" value="protein"/>
</dbReference>
<dbReference type="Bgee" id="ENSMUSG00000027519">
    <property type="expression patterns" value="Expressed in humerus cartilage element and 254 other cell types or tissues"/>
</dbReference>
<dbReference type="ExpressionAtlas" id="P35285">
    <property type="expression patterns" value="baseline and differential"/>
</dbReference>
<dbReference type="GO" id="GO:0015629">
    <property type="term" value="C:actin cytoskeleton"/>
    <property type="evidence" value="ECO:0000314"/>
    <property type="project" value="MGI"/>
</dbReference>
<dbReference type="GO" id="GO:0005769">
    <property type="term" value="C:early endosome"/>
    <property type="evidence" value="ECO:0007669"/>
    <property type="project" value="UniProtKB-SubCell"/>
</dbReference>
<dbReference type="GO" id="GO:0010008">
    <property type="term" value="C:endosome membrane"/>
    <property type="evidence" value="ECO:0007669"/>
    <property type="project" value="UniProtKB-SubCell"/>
</dbReference>
<dbReference type="GO" id="GO:0005794">
    <property type="term" value="C:Golgi apparatus"/>
    <property type="evidence" value="ECO:0007669"/>
    <property type="project" value="Ensembl"/>
</dbReference>
<dbReference type="GO" id="GO:0005770">
    <property type="term" value="C:late endosome"/>
    <property type="evidence" value="ECO:0007669"/>
    <property type="project" value="UniProtKB-SubCell"/>
</dbReference>
<dbReference type="GO" id="GO:0045335">
    <property type="term" value="C:phagocytic vesicle"/>
    <property type="evidence" value="ECO:0000250"/>
    <property type="project" value="UniProtKB"/>
</dbReference>
<dbReference type="GO" id="GO:0030670">
    <property type="term" value="C:phagocytic vesicle membrane"/>
    <property type="evidence" value="ECO:0007669"/>
    <property type="project" value="UniProtKB-SubCell"/>
</dbReference>
<dbReference type="GO" id="GO:0005886">
    <property type="term" value="C:plasma membrane"/>
    <property type="evidence" value="ECO:0007669"/>
    <property type="project" value="UniProtKB-SubCell"/>
</dbReference>
<dbReference type="GO" id="GO:0001726">
    <property type="term" value="C:ruffle"/>
    <property type="evidence" value="ECO:0007669"/>
    <property type="project" value="UniProtKB-SubCell"/>
</dbReference>
<dbReference type="GO" id="GO:0019003">
    <property type="term" value="F:GDP binding"/>
    <property type="evidence" value="ECO:0000250"/>
    <property type="project" value="UniProtKB"/>
</dbReference>
<dbReference type="GO" id="GO:0005525">
    <property type="term" value="F:GTP binding"/>
    <property type="evidence" value="ECO:0000314"/>
    <property type="project" value="UniProtKB"/>
</dbReference>
<dbReference type="GO" id="GO:0003924">
    <property type="term" value="F:GTPase activity"/>
    <property type="evidence" value="ECO:0000314"/>
    <property type="project" value="UniProtKB"/>
</dbReference>
<dbReference type="GO" id="GO:0006897">
    <property type="term" value="P:endocytosis"/>
    <property type="evidence" value="ECO:0007669"/>
    <property type="project" value="UniProtKB-KW"/>
</dbReference>
<dbReference type="GO" id="GO:0007032">
    <property type="term" value="P:endosome organization"/>
    <property type="evidence" value="ECO:0007669"/>
    <property type="project" value="Ensembl"/>
</dbReference>
<dbReference type="GO" id="GO:0015031">
    <property type="term" value="P:protein transport"/>
    <property type="evidence" value="ECO:0007669"/>
    <property type="project" value="UniProtKB-KW"/>
</dbReference>
<dbReference type="GO" id="GO:0097494">
    <property type="term" value="P:regulation of vesicle size"/>
    <property type="evidence" value="ECO:0007669"/>
    <property type="project" value="Ensembl"/>
</dbReference>
<dbReference type="CDD" id="cd01860">
    <property type="entry name" value="Rab5_related"/>
    <property type="match status" value="1"/>
</dbReference>
<dbReference type="FunFam" id="3.40.50.300:FF:000346">
    <property type="entry name" value="RAB31, member RAS oncogene family"/>
    <property type="match status" value="1"/>
</dbReference>
<dbReference type="Gene3D" id="3.40.50.300">
    <property type="entry name" value="P-loop containing nucleotide triphosphate hydrolases"/>
    <property type="match status" value="1"/>
</dbReference>
<dbReference type="InterPro" id="IPR027417">
    <property type="entry name" value="P-loop_NTPase"/>
</dbReference>
<dbReference type="InterPro" id="IPR005225">
    <property type="entry name" value="Small_GTP-bd"/>
</dbReference>
<dbReference type="InterPro" id="IPR001806">
    <property type="entry name" value="Small_GTPase"/>
</dbReference>
<dbReference type="NCBIfam" id="TIGR00231">
    <property type="entry name" value="small_GTP"/>
    <property type="match status" value="1"/>
</dbReference>
<dbReference type="PANTHER" id="PTHR47978">
    <property type="match status" value="1"/>
</dbReference>
<dbReference type="Pfam" id="PF00071">
    <property type="entry name" value="Ras"/>
    <property type="match status" value="1"/>
</dbReference>
<dbReference type="PRINTS" id="PR00449">
    <property type="entry name" value="RASTRNSFRMNG"/>
</dbReference>
<dbReference type="SMART" id="SM00175">
    <property type="entry name" value="RAB"/>
    <property type="match status" value="1"/>
</dbReference>
<dbReference type="SMART" id="SM00176">
    <property type="entry name" value="RAN"/>
    <property type="match status" value="1"/>
</dbReference>
<dbReference type="SMART" id="SM00173">
    <property type="entry name" value="RAS"/>
    <property type="match status" value="1"/>
</dbReference>
<dbReference type="SMART" id="SM00174">
    <property type="entry name" value="RHO"/>
    <property type="match status" value="1"/>
</dbReference>
<dbReference type="SUPFAM" id="SSF52540">
    <property type="entry name" value="P-loop containing nucleoside triphosphate hydrolases"/>
    <property type="match status" value="1"/>
</dbReference>
<dbReference type="PROSITE" id="PS51419">
    <property type="entry name" value="RAB"/>
    <property type="match status" value="1"/>
</dbReference>
<reference key="1">
    <citation type="submission" date="2001-05" db="EMBL/GenBank/DDBJ databases">
        <title>Mapping and characterization of mouse Rab22a gene.</title>
        <authorList>
            <person name="Kussmann S."/>
            <person name="Worch S."/>
            <person name="Hansmann I."/>
            <person name="Schlote D."/>
        </authorList>
    </citation>
    <scope>NUCLEOTIDE SEQUENCE [MRNA]</scope>
</reference>
<reference key="2">
    <citation type="journal article" date="2005" name="Science">
        <title>The transcriptional landscape of the mammalian genome.</title>
        <authorList>
            <person name="Carninci P."/>
            <person name="Kasukawa T."/>
            <person name="Katayama S."/>
            <person name="Gough J."/>
            <person name="Frith M.C."/>
            <person name="Maeda N."/>
            <person name="Oyama R."/>
            <person name="Ravasi T."/>
            <person name="Lenhard B."/>
            <person name="Wells C."/>
            <person name="Kodzius R."/>
            <person name="Shimokawa K."/>
            <person name="Bajic V.B."/>
            <person name="Brenner S.E."/>
            <person name="Batalov S."/>
            <person name="Forrest A.R."/>
            <person name="Zavolan M."/>
            <person name="Davis M.J."/>
            <person name="Wilming L.G."/>
            <person name="Aidinis V."/>
            <person name="Allen J.E."/>
            <person name="Ambesi-Impiombato A."/>
            <person name="Apweiler R."/>
            <person name="Aturaliya R.N."/>
            <person name="Bailey T.L."/>
            <person name="Bansal M."/>
            <person name="Baxter L."/>
            <person name="Beisel K.W."/>
            <person name="Bersano T."/>
            <person name="Bono H."/>
            <person name="Chalk A.M."/>
            <person name="Chiu K.P."/>
            <person name="Choudhary V."/>
            <person name="Christoffels A."/>
            <person name="Clutterbuck D.R."/>
            <person name="Crowe M.L."/>
            <person name="Dalla E."/>
            <person name="Dalrymple B.P."/>
            <person name="de Bono B."/>
            <person name="Della Gatta G."/>
            <person name="di Bernardo D."/>
            <person name="Down T."/>
            <person name="Engstrom P."/>
            <person name="Fagiolini M."/>
            <person name="Faulkner G."/>
            <person name="Fletcher C.F."/>
            <person name="Fukushima T."/>
            <person name="Furuno M."/>
            <person name="Futaki S."/>
            <person name="Gariboldi M."/>
            <person name="Georgii-Hemming P."/>
            <person name="Gingeras T.R."/>
            <person name="Gojobori T."/>
            <person name="Green R.E."/>
            <person name="Gustincich S."/>
            <person name="Harbers M."/>
            <person name="Hayashi Y."/>
            <person name="Hensch T.K."/>
            <person name="Hirokawa N."/>
            <person name="Hill D."/>
            <person name="Huminiecki L."/>
            <person name="Iacono M."/>
            <person name="Ikeo K."/>
            <person name="Iwama A."/>
            <person name="Ishikawa T."/>
            <person name="Jakt M."/>
            <person name="Kanapin A."/>
            <person name="Katoh M."/>
            <person name="Kawasawa Y."/>
            <person name="Kelso J."/>
            <person name="Kitamura H."/>
            <person name="Kitano H."/>
            <person name="Kollias G."/>
            <person name="Krishnan S.P."/>
            <person name="Kruger A."/>
            <person name="Kummerfeld S.K."/>
            <person name="Kurochkin I.V."/>
            <person name="Lareau L.F."/>
            <person name="Lazarevic D."/>
            <person name="Lipovich L."/>
            <person name="Liu J."/>
            <person name="Liuni S."/>
            <person name="McWilliam S."/>
            <person name="Madan Babu M."/>
            <person name="Madera M."/>
            <person name="Marchionni L."/>
            <person name="Matsuda H."/>
            <person name="Matsuzawa S."/>
            <person name="Miki H."/>
            <person name="Mignone F."/>
            <person name="Miyake S."/>
            <person name="Morris K."/>
            <person name="Mottagui-Tabar S."/>
            <person name="Mulder N."/>
            <person name="Nakano N."/>
            <person name="Nakauchi H."/>
            <person name="Ng P."/>
            <person name="Nilsson R."/>
            <person name="Nishiguchi S."/>
            <person name="Nishikawa S."/>
            <person name="Nori F."/>
            <person name="Ohara O."/>
            <person name="Okazaki Y."/>
            <person name="Orlando V."/>
            <person name="Pang K.C."/>
            <person name="Pavan W.J."/>
            <person name="Pavesi G."/>
            <person name="Pesole G."/>
            <person name="Petrovsky N."/>
            <person name="Piazza S."/>
            <person name="Reed J."/>
            <person name="Reid J.F."/>
            <person name="Ring B.Z."/>
            <person name="Ringwald M."/>
            <person name="Rost B."/>
            <person name="Ruan Y."/>
            <person name="Salzberg S.L."/>
            <person name="Sandelin A."/>
            <person name="Schneider C."/>
            <person name="Schoenbach C."/>
            <person name="Sekiguchi K."/>
            <person name="Semple C.A."/>
            <person name="Seno S."/>
            <person name="Sessa L."/>
            <person name="Sheng Y."/>
            <person name="Shibata Y."/>
            <person name="Shimada H."/>
            <person name="Shimada K."/>
            <person name="Silva D."/>
            <person name="Sinclair B."/>
            <person name="Sperling S."/>
            <person name="Stupka E."/>
            <person name="Sugiura K."/>
            <person name="Sultana R."/>
            <person name="Takenaka Y."/>
            <person name="Taki K."/>
            <person name="Tammoja K."/>
            <person name="Tan S.L."/>
            <person name="Tang S."/>
            <person name="Taylor M.S."/>
            <person name="Tegner J."/>
            <person name="Teichmann S.A."/>
            <person name="Ueda H.R."/>
            <person name="van Nimwegen E."/>
            <person name="Verardo R."/>
            <person name="Wei C.L."/>
            <person name="Yagi K."/>
            <person name="Yamanishi H."/>
            <person name="Zabarovsky E."/>
            <person name="Zhu S."/>
            <person name="Zimmer A."/>
            <person name="Hide W."/>
            <person name="Bult C."/>
            <person name="Grimmond S.M."/>
            <person name="Teasdale R.D."/>
            <person name="Liu E.T."/>
            <person name="Brusic V."/>
            <person name="Quackenbush J."/>
            <person name="Wahlestedt C."/>
            <person name="Mattick J.S."/>
            <person name="Hume D.A."/>
            <person name="Kai C."/>
            <person name="Sasaki D."/>
            <person name="Tomaru Y."/>
            <person name="Fukuda S."/>
            <person name="Kanamori-Katayama M."/>
            <person name="Suzuki M."/>
            <person name="Aoki J."/>
            <person name="Arakawa T."/>
            <person name="Iida J."/>
            <person name="Imamura K."/>
            <person name="Itoh M."/>
            <person name="Kato T."/>
            <person name="Kawaji H."/>
            <person name="Kawagashira N."/>
            <person name="Kawashima T."/>
            <person name="Kojima M."/>
            <person name="Kondo S."/>
            <person name="Konno H."/>
            <person name="Nakano K."/>
            <person name="Ninomiya N."/>
            <person name="Nishio T."/>
            <person name="Okada M."/>
            <person name="Plessy C."/>
            <person name="Shibata K."/>
            <person name="Shiraki T."/>
            <person name="Suzuki S."/>
            <person name="Tagami M."/>
            <person name="Waki K."/>
            <person name="Watahiki A."/>
            <person name="Okamura-Oho Y."/>
            <person name="Suzuki H."/>
            <person name="Kawai J."/>
            <person name="Hayashizaki Y."/>
        </authorList>
    </citation>
    <scope>NUCLEOTIDE SEQUENCE [LARGE SCALE MRNA]</scope>
    <source>
        <strain>C57BL/6J</strain>
        <tissue>Bone marrow</tissue>
        <tissue>Testis</tissue>
    </source>
</reference>
<reference key="3">
    <citation type="journal article" date="2004" name="Genome Res.">
        <title>The status, quality, and expansion of the NIH full-length cDNA project: the Mammalian Gene Collection (MGC).</title>
        <authorList>
            <consortium name="The MGC Project Team"/>
        </authorList>
    </citation>
    <scope>NUCLEOTIDE SEQUENCE [LARGE SCALE MRNA]</scope>
</reference>
<reference key="4">
    <citation type="journal article" date="1992" name="Gene">
        <title>The complexity of the Rab and Rho GTP-binding protein subfamilies revealed by a PCR cloning approach.</title>
        <authorList>
            <person name="Chavrier P."/>
            <person name="Simons K."/>
            <person name="Zerial M."/>
        </authorList>
    </citation>
    <scope>NUCLEOTIDE SEQUENCE [MRNA] OF 17-65</scope>
    <source>
        <tissue>Kidney</tissue>
    </source>
</reference>
<reference key="5">
    <citation type="journal article" date="1993" name="J. Cell Sci.">
        <title>Molecular cloning and subcellular localization of three GTP-binding proteins of the rab subfamily.</title>
        <authorList>
            <person name="Olkkonen V.M."/>
            <person name="Dupree P."/>
            <person name="Killisch I."/>
            <person name="Luetcke A."/>
            <person name="Simons K."/>
            <person name="Zerial M."/>
        </authorList>
    </citation>
    <scope>TISSUE SPECIFICITY</scope>
</reference>
<reference key="6">
    <citation type="journal article" date="2009" name="Mol. Biol. Cell">
        <title>Rabex-5 is a Rab22 effector and mediates a Rab22-Rab5 signaling cascade in endocytosis.</title>
        <authorList>
            <person name="Zhu H."/>
            <person name="Liang Z."/>
            <person name="Li G."/>
        </authorList>
    </citation>
    <scope>FUNCTION</scope>
    <scope>SUBCELLULAR LOCATION</scope>
    <scope>INTERACTION WITH RABGEF1</scope>
</reference>
<reference key="7">
    <citation type="journal article" date="2010" name="Cell">
        <title>A tissue-specific atlas of mouse protein phosphorylation and expression.</title>
        <authorList>
            <person name="Huttlin E.L."/>
            <person name="Jedrychowski M.P."/>
            <person name="Elias J.E."/>
            <person name="Goswami T."/>
            <person name="Rad R."/>
            <person name="Beausoleil S.A."/>
            <person name="Villen J."/>
            <person name="Haas W."/>
            <person name="Sowa M.E."/>
            <person name="Gygi S.P."/>
        </authorList>
    </citation>
    <scope>IDENTIFICATION BY MASS SPECTROMETRY [LARGE SCALE ANALYSIS]</scope>
    <source>
        <tissue>Brain</tissue>
        <tissue>Brown adipose tissue</tissue>
        <tissue>Heart</tissue>
        <tissue>Kidney</tissue>
        <tissue>Liver</tissue>
        <tissue>Lung</tissue>
        <tissue>Pancreas</tissue>
        <tissue>Spleen</tissue>
        <tissue>Testis</tissue>
    </source>
</reference>
<reference key="8">
    <citation type="journal article" date="2016" name="Elife">
        <title>Ankyrin-B is a PI3P effector that promotes polarized alpha5beta1-integrin recycling via recruiting RabGAP1L to early endosomes.</title>
        <authorList>
            <person name="Qu F."/>
            <person name="Lorenzo D.N."/>
            <person name="King S.J."/>
            <person name="Brooks R."/>
            <person name="Bear J.E."/>
            <person name="Bennett V."/>
        </authorList>
    </citation>
    <scope>FUNCTION</scope>
    <scope>SUBCELLULAR LOCATION</scope>
    <scope>MUTAGENESIS OF GLN-64</scope>
</reference>
<reference key="9">
    <citation type="journal article" date="2005" name="Nature">
        <title>Structural basis of family-wide Rab GTPase recognition by rabenosyn-5.</title>
        <authorList>
            <person name="Eathiraj S."/>
            <person name="Pan X."/>
            <person name="Ritacco C."/>
            <person name="Lambright D.G."/>
        </authorList>
    </citation>
    <scope>X-RAY CRYSTALLOGRAPHY (1.32 ANGSTROMS) OF 2-169 IN COMPLEX WITH GTP ANALOG AND ZFYVE20</scope>
    <scope>INTERACTION WITH ZFYVE20</scope>
</reference>
<protein>
    <recommendedName>
        <fullName>Ras-related protein Rab-22A</fullName>
        <shortName>Rab-22</shortName>
    </recommendedName>
    <alternativeName>
        <fullName>Rab-14</fullName>
    </alternativeName>
</protein>
<keyword id="KW-0002">3D-structure</keyword>
<keyword id="KW-1003">Cell membrane</keyword>
<keyword id="KW-0966">Cell projection</keyword>
<keyword id="KW-0968">Cytoplasmic vesicle</keyword>
<keyword id="KW-0254">Endocytosis</keyword>
<keyword id="KW-0967">Endosome</keyword>
<keyword id="KW-0342">GTP-binding</keyword>
<keyword id="KW-0449">Lipoprotein</keyword>
<keyword id="KW-0472">Membrane</keyword>
<keyword id="KW-0547">Nucleotide-binding</keyword>
<keyword id="KW-0636">Prenylation</keyword>
<keyword id="KW-0653">Protein transport</keyword>
<keyword id="KW-1185">Reference proteome</keyword>
<keyword id="KW-0813">Transport</keyword>
<sequence>MALRELKVCLLGDTGVGKSSIVWRFVEDSFDPNINPTIGASFMTKTVQYQNELHKFLIWDTAGQERFRALAPMYYRGSAAAIIVYDITKEETFSTLKNWVRELRQHGPPSIVVAIAGNKCDLTDVREVMERDAKDYADSIHAIFVETSAKNAININELFIEISRRIPSTDANPASGGKGFKLRRQPSEPKRSCC</sequence>